<comment type="function">
    <text evidence="3">Catalyzes the reversible conversion of glucose 1-phosphate into glucose 6-phosphate (PubMed:9497037). This enzyme participates in both the breakdown and synthesis of glucose (PubMed:9497037).</text>
</comment>
<comment type="catalytic activity">
    <reaction evidence="3">
        <text>alpha-D-glucose 1-phosphate = alpha-D-glucose 6-phosphate</text>
        <dbReference type="Rhea" id="RHEA:23536"/>
        <dbReference type="ChEBI" id="CHEBI:58225"/>
        <dbReference type="ChEBI" id="CHEBI:58601"/>
        <dbReference type="EC" id="5.4.2.2"/>
    </reaction>
</comment>
<comment type="cofactor">
    <cofactor evidence="1">
        <name>Mg(2+)</name>
        <dbReference type="ChEBI" id="CHEBI:18420"/>
    </cofactor>
    <text evidence="1">Binds 1 Mg(2+) ion per subunit.</text>
</comment>
<comment type="subcellular location">
    <subcellularLocation>
        <location evidence="1">Cytoplasm</location>
    </subcellularLocation>
</comment>
<comment type="similarity">
    <text evidence="5">Belongs to the phosphohexose mutase family.</text>
</comment>
<organism evidence="9">
    <name type="scientific">Entamoeba histolytica (strain ATCC 30459 / HM-1:IMSS / ABRM)</name>
    <dbReference type="NCBI Taxonomy" id="294381"/>
    <lineage>
        <taxon>Eukaryota</taxon>
        <taxon>Amoebozoa</taxon>
        <taxon>Evosea</taxon>
        <taxon>Archamoebae</taxon>
        <taxon>Mastigamoebida</taxon>
        <taxon>Entamoebidae</taxon>
        <taxon>Entamoeba</taxon>
    </lineage>
</organism>
<gene>
    <name evidence="4" type="primary">PGM</name>
    <name evidence="9" type="ORF">EHI_110120</name>
</gene>
<keyword id="KW-0963">Cytoplasm</keyword>
<keyword id="KW-0413">Isomerase</keyword>
<keyword id="KW-0460">Magnesium</keyword>
<keyword id="KW-0479">Metal-binding</keyword>
<keyword id="KW-0597">Phosphoprotein</keyword>
<keyword id="KW-1185">Reference proteome</keyword>
<dbReference type="EC" id="5.4.2.2" evidence="3"/>
<dbReference type="EMBL" id="Y14444">
    <property type="protein sequence ID" value="CAA74796.1"/>
    <property type="molecule type" value="mRNA"/>
</dbReference>
<dbReference type="EMBL" id="AK419252">
    <property type="protein sequence ID" value="BAN37949.1"/>
    <property type="molecule type" value="mRNA"/>
</dbReference>
<dbReference type="EMBL" id="AB608091">
    <property type="protein sequence ID" value="BAL15186.1"/>
    <property type="molecule type" value="Genomic_DNA"/>
</dbReference>
<dbReference type="EMBL" id="DS571151">
    <property type="protein sequence ID" value="EAL51638.1"/>
    <property type="molecule type" value="Genomic_DNA"/>
</dbReference>
<dbReference type="RefSeq" id="XP_657021.1">
    <property type="nucleotide sequence ID" value="XM_651929.1"/>
</dbReference>
<dbReference type="SMR" id="O15820"/>
<dbReference type="STRING" id="5759.C4LU66"/>
<dbReference type="EnsemblProtists" id="GAT92137">
    <property type="protein sequence ID" value="GAT92137"/>
    <property type="gene ID" value="CL6EHI_110120"/>
</dbReference>
<dbReference type="EnsemblProtists" id="rna_EHI_110120-1">
    <property type="protein sequence ID" value="rna_EHI_110120-1"/>
    <property type="gene ID" value="EHI_110120"/>
</dbReference>
<dbReference type="GeneID" id="3411368"/>
<dbReference type="KEGG" id="ehi:EHI_110120"/>
<dbReference type="VEuPathDB" id="AmoebaDB:EHI5A_013710"/>
<dbReference type="VEuPathDB" id="AmoebaDB:EHI7A_004200"/>
<dbReference type="VEuPathDB" id="AmoebaDB:EHI8A_001790"/>
<dbReference type="VEuPathDB" id="AmoebaDB:EHI_110120"/>
<dbReference type="VEuPathDB" id="AmoebaDB:KM1_014890"/>
<dbReference type="eggNOG" id="KOG0625">
    <property type="taxonomic scope" value="Eukaryota"/>
</dbReference>
<dbReference type="HOGENOM" id="CLU_009330_0_1_1"/>
<dbReference type="OMA" id="WIQDRAN"/>
<dbReference type="OrthoDB" id="2291at2759"/>
<dbReference type="Proteomes" id="UP000001926">
    <property type="component" value="Partially assembled WGS sequence"/>
</dbReference>
<dbReference type="GO" id="GO:0005829">
    <property type="term" value="C:cytosol"/>
    <property type="evidence" value="ECO:0000318"/>
    <property type="project" value="GO_Central"/>
</dbReference>
<dbReference type="GO" id="GO:0000287">
    <property type="term" value="F:magnesium ion binding"/>
    <property type="evidence" value="ECO:0007669"/>
    <property type="project" value="InterPro"/>
</dbReference>
<dbReference type="GO" id="GO:0004614">
    <property type="term" value="F:phosphoglucomutase activity"/>
    <property type="evidence" value="ECO:0000318"/>
    <property type="project" value="GO_Central"/>
</dbReference>
<dbReference type="GO" id="GO:0005975">
    <property type="term" value="P:carbohydrate metabolic process"/>
    <property type="evidence" value="ECO:0000318"/>
    <property type="project" value="GO_Central"/>
</dbReference>
<dbReference type="FunFam" id="3.30.310.50:FF:000010">
    <property type="entry name" value="Phosphoglucomutase"/>
    <property type="match status" value="1"/>
</dbReference>
<dbReference type="FunFam" id="3.40.120.10:FF:000004">
    <property type="entry name" value="Phosphoglucomutase 5"/>
    <property type="match status" value="1"/>
</dbReference>
<dbReference type="Gene3D" id="3.40.120.10">
    <property type="entry name" value="Alpha-D-Glucose-1,6-Bisphosphate, subunit A, domain 3"/>
    <property type="match status" value="3"/>
</dbReference>
<dbReference type="Gene3D" id="3.30.310.50">
    <property type="entry name" value="Alpha-D-phosphohexomutase, C-terminal domain"/>
    <property type="match status" value="1"/>
</dbReference>
<dbReference type="InterPro" id="IPR005844">
    <property type="entry name" value="A-D-PHexomutase_a/b/a-I"/>
</dbReference>
<dbReference type="InterPro" id="IPR016055">
    <property type="entry name" value="A-D-PHexomutase_a/b/a-I/II/III"/>
</dbReference>
<dbReference type="InterPro" id="IPR005845">
    <property type="entry name" value="A-D-PHexomutase_a/b/a-II"/>
</dbReference>
<dbReference type="InterPro" id="IPR005846">
    <property type="entry name" value="A-D-PHexomutase_a/b/a-III"/>
</dbReference>
<dbReference type="InterPro" id="IPR036900">
    <property type="entry name" value="A-D-PHexomutase_C_sf"/>
</dbReference>
<dbReference type="InterPro" id="IPR016066">
    <property type="entry name" value="A-D-PHexomutase_CS"/>
</dbReference>
<dbReference type="InterPro" id="IPR005841">
    <property type="entry name" value="Alpha-D-phosphohexomutase_SF"/>
</dbReference>
<dbReference type="InterPro" id="IPR045244">
    <property type="entry name" value="PGM"/>
</dbReference>
<dbReference type="NCBIfam" id="NF005737">
    <property type="entry name" value="PRK07564.1-1"/>
    <property type="match status" value="1"/>
</dbReference>
<dbReference type="PANTHER" id="PTHR22573:SF2">
    <property type="entry name" value="PHOSPHOGLUCOMUTASE"/>
    <property type="match status" value="1"/>
</dbReference>
<dbReference type="PANTHER" id="PTHR22573">
    <property type="entry name" value="PHOSPHOHEXOMUTASE FAMILY MEMBER"/>
    <property type="match status" value="1"/>
</dbReference>
<dbReference type="Pfam" id="PF24947">
    <property type="entry name" value="PGM1_C_vert_fung"/>
    <property type="match status" value="1"/>
</dbReference>
<dbReference type="Pfam" id="PF02878">
    <property type="entry name" value="PGM_PMM_I"/>
    <property type="match status" value="1"/>
</dbReference>
<dbReference type="Pfam" id="PF02879">
    <property type="entry name" value="PGM_PMM_II"/>
    <property type="match status" value="1"/>
</dbReference>
<dbReference type="Pfam" id="PF02880">
    <property type="entry name" value="PGM_PMM_III"/>
    <property type="match status" value="1"/>
</dbReference>
<dbReference type="PRINTS" id="PR00509">
    <property type="entry name" value="PGMPMM"/>
</dbReference>
<dbReference type="SUPFAM" id="SSF55957">
    <property type="entry name" value="Phosphoglucomutase, C-terminal domain"/>
    <property type="match status" value="1"/>
</dbReference>
<dbReference type="SUPFAM" id="SSF53738">
    <property type="entry name" value="Phosphoglucomutase, first 3 domains"/>
    <property type="match status" value="3"/>
</dbReference>
<dbReference type="PROSITE" id="PS00710">
    <property type="entry name" value="PGM_PMM"/>
    <property type="match status" value="1"/>
</dbReference>
<accession>O15820</accession>
<accession>A0A060N060</accession>
<accession>A0A175JEW3</accession>
<accession>C4LU66</accession>
<feature type="chain" id="PRO_0000147792" description="Phosphoglucomutase">
    <location>
        <begin position="1"/>
        <end position="553"/>
    </location>
</feature>
<feature type="region of interest" description="Disordered" evidence="2">
    <location>
        <begin position="1"/>
        <end position="25"/>
    </location>
</feature>
<feature type="compositionally biased region" description="Polar residues" evidence="2">
    <location>
        <begin position="11"/>
        <end position="20"/>
    </location>
</feature>
<feature type="active site" description="Phosphoserine intermediate" evidence="1">
    <location>
        <position position="117"/>
    </location>
</feature>
<feature type="binding site" evidence="1">
    <location>
        <position position="20"/>
    </location>
    <ligand>
        <name>substrate</name>
    </ligand>
</feature>
<feature type="binding site" evidence="1">
    <location>
        <position position="24"/>
    </location>
    <ligand>
        <name>substrate</name>
    </ligand>
</feature>
<feature type="binding site" evidence="1">
    <location>
        <begin position="117"/>
        <end position="118"/>
    </location>
    <ligand>
        <name>substrate</name>
    </ligand>
</feature>
<feature type="binding site" description="via phosphate group" evidence="1">
    <location>
        <position position="117"/>
    </location>
    <ligand>
        <name>Mg(2+)</name>
        <dbReference type="ChEBI" id="CHEBI:18420"/>
    </ligand>
</feature>
<feature type="binding site" evidence="1">
    <location>
        <position position="131"/>
    </location>
    <ligand>
        <name>substrate</name>
    </ligand>
</feature>
<feature type="binding site" evidence="1">
    <location>
        <position position="289"/>
    </location>
    <ligand>
        <name>Mg(2+)</name>
        <dbReference type="ChEBI" id="CHEBI:18420"/>
    </ligand>
</feature>
<feature type="binding site" evidence="1">
    <location>
        <position position="291"/>
    </location>
    <ligand>
        <name>Mg(2+)</name>
        <dbReference type="ChEBI" id="CHEBI:18420"/>
    </ligand>
</feature>
<feature type="binding site" evidence="1">
    <location>
        <begin position="293"/>
        <end position="294"/>
    </location>
    <ligand>
        <name>substrate</name>
    </ligand>
</feature>
<feature type="binding site" evidence="1">
    <location>
        <position position="293"/>
    </location>
    <ligand>
        <name>Mg(2+)</name>
        <dbReference type="ChEBI" id="CHEBI:18420"/>
    </ligand>
</feature>
<feature type="binding site" evidence="1">
    <location>
        <position position="352"/>
    </location>
    <ligand>
        <name>substrate</name>
    </ligand>
</feature>
<feature type="binding site" evidence="1">
    <location>
        <begin position="371"/>
        <end position="373"/>
    </location>
    <ligand>
        <name>substrate</name>
    </ligand>
</feature>
<feature type="binding site" evidence="1">
    <location>
        <position position="384"/>
    </location>
    <ligand>
        <name>substrate</name>
    </ligand>
</feature>
<feature type="binding site" evidence="1">
    <location>
        <position position="509"/>
    </location>
    <ligand>
        <name>substrate</name>
    </ligand>
</feature>
<proteinExistence type="evidence at protein level"/>
<evidence type="ECO:0000250" key="1">
    <source>
        <dbReference type="UniProtKB" id="P00949"/>
    </source>
</evidence>
<evidence type="ECO:0000256" key="2">
    <source>
        <dbReference type="SAM" id="MobiDB-lite"/>
    </source>
</evidence>
<evidence type="ECO:0000269" key="3">
    <source>
    </source>
</evidence>
<evidence type="ECO:0000303" key="4">
    <source>
    </source>
</evidence>
<evidence type="ECO:0000305" key="5"/>
<evidence type="ECO:0000312" key="6">
    <source>
        <dbReference type="EMBL" id="BAL15186.1"/>
    </source>
</evidence>
<evidence type="ECO:0000312" key="7">
    <source>
        <dbReference type="EMBL" id="BAN37949.1"/>
    </source>
</evidence>
<evidence type="ECO:0000312" key="8">
    <source>
        <dbReference type="EMBL" id="CAA74796.1"/>
    </source>
</evidence>
<evidence type="ECO:0000312" key="9">
    <source>
        <dbReference type="EMBL" id="EAL51638.1"/>
    </source>
</evidence>
<name>PGM_ENTH1</name>
<protein>
    <recommendedName>
        <fullName evidence="4">Phosphoglucomutase</fullName>
        <ecNumber evidence="3">5.4.2.2</ecNumber>
    </recommendedName>
    <alternativeName>
        <fullName>Glucose phosphomutase</fullName>
    </alternativeName>
</protein>
<reference evidence="8" key="1">
    <citation type="journal article" date="1997" name="Mol. Biochem. Parasitol.">
        <title>Molecular and biochemical characterization of phosphoglucomutases from Entamoeba histolytica and Entomoeba dispar.</title>
        <authorList>
            <person name="Ortner S."/>
            <person name="Binder M."/>
            <person name="Scheiner O."/>
            <person name="Wiedermann G."/>
            <person name="Duchene M."/>
        </authorList>
    </citation>
    <scope>NUCLEOTIDE SEQUENCE [MRNA]</scope>
    <scope>FUNCTION</scope>
    <scope>CATALYTIC ACTIVITY</scope>
    <source>
        <strain evidence="8">SFL-3</strain>
    </source>
</reference>
<reference evidence="6" key="2">
    <citation type="journal article" date="2011" name="Parasite">
        <title>Characterization of a novel Entamoeba histolytica strain from Burkina Faso, Africa, possessing a unique hexokinase-2 gene.</title>
        <authorList>
            <person name="Suzuki J."/>
            <person name="Kobayashi S."/>
            <person name="Imada M."/>
            <person name="Tolba M.E."/>
            <person name="Takeuchi T."/>
        </authorList>
    </citation>
    <scope>NUCLEOTIDE SEQUENCE [MRNA]</scope>
    <source>
        <strain evidence="6">BF-841 cl1</strain>
    </source>
</reference>
<reference evidence="7" key="3">
    <citation type="submission" date="2012-06" db="EMBL/GenBank/DDBJ databases">
        <title>Short 5' UTR of Entamoeba genes.</title>
        <authorList>
            <person name="Hiranuka K."/>
            <person name="Kumagai M."/>
            <person name="Wakaguri H."/>
            <person name="Suzuki Y."/>
            <person name="Sugano S."/>
            <person name="Watanabe J."/>
            <person name="Makioka A."/>
        </authorList>
    </citation>
    <scope>NUCLEOTIDE SEQUENCE [GENOMIC DNA]</scope>
    <source>
        <strain evidence="7">ATCC 30459 / HM-1:IMSS / ABRM</strain>
    </source>
</reference>
<reference evidence="9" key="4">
    <citation type="journal article" date="2005" name="Nature">
        <title>The genome of the protist parasite Entamoeba histolytica.</title>
        <authorList>
            <person name="Loftus B.J."/>
            <person name="Anderson I."/>
            <person name="Davies R."/>
            <person name="Alsmark U.C."/>
            <person name="Samuelson J."/>
            <person name="Amedeo P."/>
            <person name="Roncaglia P."/>
            <person name="Berriman M."/>
            <person name="Hirt R.P."/>
            <person name="Mann B.J."/>
            <person name="Nozaki T."/>
            <person name="Suh B."/>
            <person name="Pop M."/>
            <person name="Duchene M."/>
            <person name="Ackers J."/>
            <person name="Tannich E."/>
            <person name="Leippe M."/>
            <person name="Hofer M."/>
            <person name="Bruchhaus I."/>
            <person name="Willhoeft U."/>
            <person name="Bhattacharya A."/>
            <person name="Chillingworth T."/>
            <person name="Churcher C.M."/>
            <person name="Hance Z."/>
            <person name="Harris B."/>
            <person name="Harris D."/>
            <person name="Jagels K."/>
            <person name="Moule S."/>
            <person name="Mungall K.L."/>
            <person name="Ormond D."/>
            <person name="Squares R."/>
            <person name="Whitehead S."/>
            <person name="Quail M.A."/>
            <person name="Rabbinowitsch E."/>
            <person name="Norbertczak H."/>
            <person name="Price C."/>
            <person name="Wang Z."/>
            <person name="Guillen N."/>
            <person name="Gilchrist C."/>
            <person name="Stroup S.E."/>
            <person name="Bhattacharya S."/>
            <person name="Lohia A."/>
            <person name="Foster P.G."/>
            <person name="Sicheritz-Ponten T."/>
            <person name="Weber C."/>
            <person name="Singh U."/>
            <person name="Mukherjee C."/>
            <person name="El-Sayed N.M.A."/>
            <person name="Petri W.A."/>
            <person name="Clark C.G."/>
            <person name="Embley T.M."/>
            <person name="Barrell B.G."/>
            <person name="Fraser C.M."/>
            <person name="Hall N."/>
        </authorList>
    </citation>
    <scope>NUCLEOTIDE SEQUENCE [LARGE SCALE GENOMIC DNA]</scope>
    <source>
        <strain evidence="9">ATCC 30459 / HM-1:IMSS / ABRM</strain>
    </source>
</reference>
<sequence>MQATIKRYPTSPISGQTLGTSGLRKRASEVENTPNYLENFVNAMFNAASNLQKPGKIIIGGDGRYLNLKALDIIIRVALSRGFTDIVVGKSGFMSTPAESATIIRRKAEAGFIMTASHNPAGKEHGDFGLKLNMSNGGPAPIEVTSKIEESARNIKEIVIAELNKPLNIDSVGDIEIECEGKKAVVHVIDPLEDYIAYLHECFDFENLKQFVSKYHLKVQVDGFNAVTGIYNKKVFCELLGLPESSLKNAIPMPDFGGKHPDPNLTYAAELVHAVIPEDSPYDIGFAFDGDGDRNLIVGRGAFVSPSDSLAILSTKYNDIPFFVKNGFKGVARSMPTSAAVDHVTSITETPTGWKFFGNLMDSGKISLCGEESFGTGCCGIREKDGIWAALCWVSILAAESERAQRLVGVKEILESHWAKYGRNYYQRYDFDEVDKKAAEDMMQMMRDNAKTVKCDLNGVPLKFCDDFEYHDSVDGSVTSKQGIRFVFEDGSRIIFRLSGTGSVGATIRVYFDKYSKDYKADQTKVLADMVTVAYAVSQITKFTGREKPSVVT</sequence>